<reference key="1">
    <citation type="submission" date="2005-08" db="EMBL/GenBank/DDBJ databases">
        <title>Complete sequence of Chlorobium chlorochromatii CaD3.</title>
        <authorList>
            <consortium name="US DOE Joint Genome Institute"/>
            <person name="Copeland A."/>
            <person name="Lucas S."/>
            <person name="Lapidus A."/>
            <person name="Barry K."/>
            <person name="Detter J.C."/>
            <person name="Glavina T."/>
            <person name="Hammon N."/>
            <person name="Israni S."/>
            <person name="Pitluck S."/>
            <person name="Bryant D."/>
            <person name="Schmutz J."/>
            <person name="Larimer F."/>
            <person name="Land M."/>
            <person name="Kyrpides N."/>
            <person name="Ivanova N."/>
            <person name="Richardson P."/>
        </authorList>
    </citation>
    <scope>NUCLEOTIDE SEQUENCE [LARGE SCALE GENOMIC DNA]</scope>
    <source>
        <strain>CaD3</strain>
    </source>
</reference>
<protein>
    <recommendedName>
        <fullName evidence="1">Large ribosomal subunit protein uL24</fullName>
    </recommendedName>
    <alternativeName>
        <fullName evidence="2">50S ribosomal protein L24</fullName>
    </alternativeName>
</protein>
<feature type="chain" id="PRO_0000241586" description="Large ribosomal subunit protein uL24">
    <location>
        <begin position="1"/>
        <end position="89"/>
    </location>
</feature>
<dbReference type="EMBL" id="CP000108">
    <property type="protein sequence ID" value="ABB29091.1"/>
    <property type="molecule type" value="Genomic_DNA"/>
</dbReference>
<dbReference type="SMR" id="Q3API4"/>
<dbReference type="STRING" id="340177.Cag_1840"/>
<dbReference type="KEGG" id="cch:Cag_1840"/>
<dbReference type="eggNOG" id="COG0198">
    <property type="taxonomic scope" value="Bacteria"/>
</dbReference>
<dbReference type="HOGENOM" id="CLU_093315_3_0_10"/>
<dbReference type="GO" id="GO:1990904">
    <property type="term" value="C:ribonucleoprotein complex"/>
    <property type="evidence" value="ECO:0007669"/>
    <property type="project" value="UniProtKB-KW"/>
</dbReference>
<dbReference type="GO" id="GO:0005840">
    <property type="term" value="C:ribosome"/>
    <property type="evidence" value="ECO:0007669"/>
    <property type="project" value="UniProtKB-KW"/>
</dbReference>
<dbReference type="GO" id="GO:0019843">
    <property type="term" value="F:rRNA binding"/>
    <property type="evidence" value="ECO:0007669"/>
    <property type="project" value="UniProtKB-UniRule"/>
</dbReference>
<dbReference type="GO" id="GO:0003735">
    <property type="term" value="F:structural constituent of ribosome"/>
    <property type="evidence" value="ECO:0007669"/>
    <property type="project" value="InterPro"/>
</dbReference>
<dbReference type="GO" id="GO:0006412">
    <property type="term" value="P:translation"/>
    <property type="evidence" value="ECO:0007669"/>
    <property type="project" value="UniProtKB-UniRule"/>
</dbReference>
<dbReference type="CDD" id="cd06089">
    <property type="entry name" value="KOW_RPL26"/>
    <property type="match status" value="1"/>
</dbReference>
<dbReference type="Gene3D" id="2.30.30.30">
    <property type="match status" value="1"/>
</dbReference>
<dbReference type="HAMAP" id="MF_01326_B">
    <property type="entry name" value="Ribosomal_uL24_B"/>
    <property type="match status" value="1"/>
</dbReference>
<dbReference type="InterPro" id="IPR005824">
    <property type="entry name" value="KOW"/>
</dbReference>
<dbReference type="InterPro" id="IPR014722">
    <property type="entry name" value="Rib_uL2_dom2"/>
</dbReference>
<dbReference type="InterPro" id="IPR003256">
    <property type="entry name" value="Ribosomal_uL24"/>
</dbReference>
<dbReference type="InterPro" id="IPR005825">
    <property type="entry name" value="Ribosomal_uL24_CS"/>
</dbReference>
<dbReference type="InterPro" id="IPR041988">
    <property type="entry name" value="Ribosomal_uL24_KOW"/>
</dbReference>
<dbReference type="InterPro" id="IPR008991">
    <property type="entry name" value="Translation_prot_SH3-like_sf"/>
</dbReference>
<dbReference type="NCBIfam" id="TIGR01079">
    <property type="entry name" value="rplX_bact"/>
    <property type="match status" value="1"/>
</dbReference>
<dbReference type="PANTHER" id="PTHR12903">
    <property type="entry name" value="MITOCHONDRIAL RIBOSOMAL PROTEIN L24"/>
    <property type="match status" value="1"/>
</dbReference>
<dbReference type="Pfam" id="PF00467">
    <property type="entry name" value="KOW"/>
    <property type="match status" value="1"/>
</dbReference>
<dbReference type="Pfam" id="PF17136">
    <property type="entry name" value="ribosomal_L24"/>
    <property type="match status" value="1"/>
</dbReference>
<dbReference type="SMART" id="SM00739">
    <property type="entry name" value="KOW"/>
    <property type="match status" value="1"/>
</dbReference>
<dbReference type="SUPFAM" id="SSF50104">
    <property type="entry name" value="Translation proteins SH3-like domain"/>
    <property type="match status" value="1"/>
</dbReference>
<dbReference type="PROSITE" id="PS01108">
    <property type="entry name" value="RIBOSOMAL_L24"/>
    <property type="match status" value="1"/>
</dbReference>
<name>RL24_CHLCH</name>
<accession>Q3API4</accession>
<keyword id="KW-0687">Ribonucleoprotein</keyword>
<keyword id="KW-0689">Ribosomal protein</keyword>
<keyword id="KW-0694">RNA-binding</keyword>
<keyword id="KW-0699">rRNA-binding</keyword>
<organism>
    <name type="scientific">Chlorobium chlorochromatii (strain CaD3)</name>
    <dbReference type="NCBI Taxonomy" id="340177"/>
    <lineage>
        <taxon>Bacteria</taxon>
        <taxon>Pseudomonadati</taxon>
        <taxon>Chlorobiota</taxon>
        <taxon>Chlorobiia</taxon>
        <taxon>Chlorobiales</taxon>
        <taxon>Chlorobiaceae</taxon>
        <taxon>Chlorobium/Pelodictyon group</taxon>
        <taxon>Chlorobium</taxon>
    </lineage>
</organism>
<sequence length="89" mass="9989">MCNILIPSNMKTGIKKVKLHVKKNDTVTVISGNDKGKMGKVLKVFPVASRVIVEGVNIRKRHMRPLQGQTQGRIIEREFPIHSSNVKKS</sequence>
<proteinExistence type="inferred from homology"/>
<gene>
    <name evidence="1" type="primary">rplX</name>
    <name type="ordered locus">Cag_1840</name>
</gene>
<evidence type="ECO:0000255" key="1">
    <source>
        <dbReference type="HAMAP-Rule" id="MF_01326"/>
    </source>
</evidence>
<evidence type="ECO:0000305" key="2"/>
<comment type="function">
    <text evidence="1">One of two assembly initiator proteins, it binds directly to the 5'-end of the 23S rRNA, where it nucleates assembly of the 50S subunit.</text>
</comment>
<comment type="function">
    <text evidence="1">One of the proteins that surrounds the polypeptide exit tunnel on the outside of the subunit.</text>
</comment>
<comment type="subunit">
    <text evidence="1">Part of the 50S ribosomal subunit.</text>
</comment>
<comment type="similarity">
    <text evidence="1">Belongs to the universal ribosomal protein uL24 family.</text>
</comment>